<proteinExistence type="evidence at protein level"/>
<dbReference type="EC" id="2.7.1.33" evidence="1"/>
<dbReference type="EMBL" id="CP000964">
    <property type="protein sequence ID" value="ACI11207.1"/>
    <property type="molecule type" value="Genomic_DNA"/>
</dbReference>
<dbReference type="PDB" id="4F7W">
    <property type="method" value="X-ray"/>
    <property type="resolution" value="2.10 A"/>
    <property type="chains" value="A/B/C/D/E/F/G/H=1-316"/>
</dbReference>
<dbReference type="PDB" id="4GI7">
    <property type="method" value="X-ray"/>
    <property type="resolution" value="1.95 A"/>
    <property type="chains" value="A/B/C/D/E/F/G/H=1-316"/>
</dbReference>
<dbReference type="PDB" id="4NE2">
    <property type="method" value="X-ray"/>
    <property type="resolution" value="1.90 A"/>
    <property type="chains" value="A/B=1-316"/>
</dbReference>
<dbReference type="PDBsum" id="4F7W"/>
<dbReference type="PDBsum" id="4GI7"/>
<dbReference type="PDBsum" id="4NE2"/>
<dbReference type="SMR" id="B5XYG3"/>
<dbReference type="KEGG" id="kpe:KPK_5321"/>
<dbReference type="HOGENOM" id="CLU_053818_1_1_6"/>
<dbReference type="BRENDA" id="2.7.1.33">
    <property type="organism ID" value="2814"/>
</dbReference>
<dbReference type="UniPathway" id="UPA00241">
    <property type="reaction ID" value="UER00352"/>
</dbReference>
<dbReference type="EvolutionaryTrace" id="B5XYG3"/>
<dbReference type="Proteomes" id="UP000001734">
    <property type="component" value="Chromosome"/>
</dbReference>
<dbReference type="GO" id="GO:0005737">
    <property type="term" value="C:cytoplasm"/>
    <property type="evidence" value="ECO:0007669"/>
    <property type="project" value="UniProtKB-SubCell"/>
</dbReference>
<dbReference type="GO" id="GO:0005524">
    <property type="term" value="F:ATP binding"/>
    <property type="evidence" value="ECO:0007669"/>
    <property type="project" value="UniProtKB-UniRule"/>
</dbReference>
<dbReference type="GO" id="GO:0004594">
    <property type="term" value="F:pantothenate kinase activity"/>
    <property type="evidence" value="ECO:0007669"/>
    <property type="project" value="UniProtKB-UniRule"/>
</dbReference>
<dbReference type="GO" id="GO:0015937">
    <property type="term" value="P:coenzyme A biosynthetic process"/>
    <property type="evidence" value="ECO:0007669"/>
    <property type="project" value="UniProtKB-UniRule"/>
</dbReference>
<dbReference type="CDD" id="cd02025">
    <property type="entry name" value="PanK"/>
    <property type="match status" value="1"/>
</dbReference>
<dbReference type="FunFam" id="3.40.50.300:FF:000242">
    <property type="entry name" value="Pantothenate kinase"/>
    <property type="match status" value="1"/>
</dbReference>
<dbReference type="Gene3D" id="3.40.50.300">
    <property type="entry name" value="P-loop containing nucleotide triphosphate hydrolases"/>
    <property type="match status" value="1"/>
</dbReference>
<dbReference type="HAMAP" id="MF_00215">
    <property type="entry name" value="Pantothen_kinase_1"/>
    <property type="match status" value="1"/>
</dbReference>
<dbReference type="InterPro" id="IPR027417">
    <property type="entry name" value="P-loop_NTPase"/>
</dbReference>
<dbReference type="InterPro" id="IPR004566">
    <property type="entry name" value="PanK"/>
</dbReference>
<dbReference type="InterPro" id="IPR006083">
    <property type="entry name" value="PRK/URK"/>
</dbReference>
<dbReference type="NCBIfam" id="TIGR00554">
    <property type="entry name" value="panK_bact"/>
    <property type="match status" value="1"/>
</dbReference>
<dbReference type="PANTHER" id="PTHR10285">
    <property type="entry name" value="URIDINE KINASE"/>
    <property type="match status" value="1"/>
</dbReference>
<dbReference type="Pfam" id="PF00485">
    <property type="entry name" value="PRK"/>
    <property type="match status" value="1"/>
</dbReference>
<dbReference type="PIRSF" id="PIRSF000545">
    <property type="entry name" value="Pantothenate_kin"/>
    <property type="match status" value="1"/>
</dbReference>
<dbReference type="SUPFAM" id="SSF52540">
    <property type="entry name" value="P-loop containing nucleoside triphosphate hydrolases"/>
    <property type="match status" value="1"/>
</dbReference>
<comment type="catalytic activity">
    <reaction evidence="1">
        <text>(R)-pantothenate + ATP = (R)-4'-phosphopantothenate + ADP + H(+)</text>
        <dbReference type="Rhea" id="RHEA:16373"/>
        <dbReference type="ChEBI" id="CHEBI:10986"/>
        <dbReference type="ChEBI" id="CHEBI:15378"/>
        <dbReference type="ChEBI" id="CHEBI:29032"/>
        <dbReference type="ChEBI" id="CHEBI:30616"/>
        <dbReference type="ChEBI" id="CHEBI:456216"/>
        <dbReference type="EC" id="2.7.1.33"/>
    </reaction>
</comment>
<comment type="pathway">
    <text evidence="1">Cofactor biosynthesis; coenzyme A biosynthesis; CoA from (R)-pantothenate: step 1/5.</text>
</comment>
<comment type="subcellular location">
    <subcellularLocation>
        <location evidence="1">Cytoplasm</location>
    </subcellularLocation>
</comment>
<comment type="similarity">
    <text evidence="1">Belongs to the prokaryotic pantothenate kinase family.</text>
</comment>
<accession>B5XYG3</accession>
<feature type="chain" id="PRO_1000099933" description="Pantothenate kinase">
    <location>
        <begin position="1"/>
        <end position="316"/>
    </location>
</feature>
<feature type="binding site" evidence="1">
    <location>
        <begin position="95"/>
        <end position="102"/>
    </location>
    <ligand>
        <name>ATP</name>
        <dbReference type="ChEBI" id="CHEBI:30616"/>
    </ligand>
</feature>
<feature type="strand" evidence="3">
    <location>
        <begin position="11"/>
        <end position="16"/>
    </location>
</feature>
<feature type="helix" evidence="3">
    <location>
        <begin position="17"/>
        <end position="21"/>
    </location>
</feature>
<feature type="helix" evidence="2">
    <location>
        <begin position="23"/>
        <end position="26"/>
    </location>
</feature>
<feature type="helix" evidence="3">
    <location>
        <begin position="33"/>
        <end position="42"/>
    </location>
</feature>
<feature type="helix" evidence="3">
    <location>
        <begin position="48"/>
        <end position="53"/>
    </location>
</feature>
<feature type="helix" evidence="3">
    <location>
        <begin position="55"/>
        <end position="80"/>
    </location>
</feature>
<feature type="strand" evidence="3">
    <location>
        <begin position="89"/>
        <end position="95"/>
    </location>
</feature>
<feature type="helix" evidence="3">
    <location>
        <begin position="101"/>
        <end position="112"/>
    </location>
</feature>
<feature type="helix" evidence="3">
    <location>
        <begin position="116"/>
        <end position="118"/>
    </location>
</feature>
<feature type="strand" evidence="3">
    <location>
        <begin position="121"/>
        <end position="125"/>
    </location>
</feature>
<feature type="helix" evidence="3">
    <location>
        <begin position="126"/>
        <end position="129"/>
    </location>
</feature>
<feature type="helix" evidence="3">
    <location>
        <begin position="133"/>
        <end position="139"/>
    </location>
</feature>
<feature type="helix" evidence="2">
    <location>
        <begin position="142"/>
        <end position="144"/>
    </location>
</feature>
<feature type="helix" evidence="3">
    <location>
        <begin position="148"/>
        <end position="150"/>
    </location>
</feature>
<feature type="helix" evidence="3">
    <location>
        <begin position="153"/>
        <end position="163"/>
    </location>
</feature>
<feature type="turn" evidence="3">
    <location>
        <begin position="164"/>
        <end position="166"/>
    </location>
</feature>
<feature type="strand" evidence="3">
    <location>
        <begin position="170"/>
        <end position="172"/>
    </location>
</feature>
<feature type="turn" evidence="3">
    <location>
        <begin position="177"/>
        <end position="180"/>
    </location>
</feature>
<feature type="strand" evidence="3">
    <location>
        <begin position="188"/>
        <end position="190"/>
    </location>
</feature>
<feature type="strand" evidence="3">
    <location>
        <begin position="194"/>
        <end position="199"/>
    </location>
</feature>
<feature type="turn" evidence="3">
    <location>
        <begin position="201"/>
        <end position="204"/>
    </location>
</feature>
<feature type="helix" evidence="3">
    <location>
        <begin position="207"/>
        <end position="209"/>
    </location>
</feature>
<feature type="helix" evidence="3">
    <location>
        <begin position="219"/>
        <end position="222"/>
    </location>
</feature>
<feature type="strand" evidence="3">
    <location>
        <begin position="224"/>
        <end position="230"/>
    </location>
</feature>
<feature type="helix" evidence="3">
    <location>
        <begin position="233"/>
        <end position="250"/>
    </location>
</feature>
<feature type="turn" evidence="3">
    <location>
        <begin position="251"/>
        <end position="253"/>
    </location>
</feature>
<feature type="helix" evidence="3">
    <location>
        <begin position="260"/>
        <end position="263"/>
    </location>
</feature>
<feature type="helix" evidence="3">
    <location>
        <begin position="267"/>
        <end position="280"/>
    </location>
</feature>
<feature type="helix" evidence="3">
    <location>
        <begin position="282"/>
        <end position="289"/>
    </location>
</feature>
<feature type="helix" evidence="3">
    <location>
        <begin position="291"/>
        <end position="296"/>
    </location>
</feature>
<feature type="strand" evidence="3">
    <location>
        <begin position="297"/>
        <end position="303"/>
    </location>
</feature>
<feature type="helix" evidence="3">
    <location>
        <begin position="305"/>
        <end position="307"/>
    </location>
</feature>
<feature type="strand" evidence="3">
    <location>
        <begin position="309"/>
        <end position="315"/>
    </location>
</feature>
<gene>
    <name evidence="1" type="primary">coaA</name>
    <name type="ordered locus">KPK_5321</name>
</gene>
<keyword id="KW-0002">3D-structure</keyword>
<keyword id="KW-0067">ATP-binding</keyword>
<keyword id="KW-0173">Coenzyme A biosynthesis</keyword>
<keyword id="KW-0963">Cytoplasm</keyword>
<keyword id="KW-0418">Kinase</keyword>
<keyword id="KW-0547">Nucleotide-binding</keyword>
<keyword id="KW-0808">Transferase</keyword>
<name>COAA_KLEP3</name>
<reference key="1">
    <citation type="journal article" date="2008" name="PLoS Genet.">
        <title>Complete genome sequence of the N2-fixing broad host range endophyte Klebsiella pneumoniae 342 and virulence predictions verified in mice.</title>
        <authorList>
            <person name="Fouts D.E."/>
            <person name="Tyler H.L."/>
            <person name="DeBoy R.T."/>
            <person name="Daugherty S."/>
            <person name="Ren Q."/>
            <person name="Badger J.H."/>
            <person name="Durkin A.S."/>
            <person name="Huot H."/>
            <person name="Shrivastava S."/>
            <person name="Kothari S."/>
            <person name="Dodson R.J."/>
            <person name="Mohamoud Y."/>
            <person name="Khouri H."/>
            <person name="Roesch L.F.W."/>
            <person name="Krogfelt K.A."/>
            <person name="Struve C."/>
            <person name="Triplett E.W."/>
            <person name="Methe B.A."/>
        </authorList>
    </citation>
    <scope>NUCLEOTIDE SEQUENCE [LARGE SCALE GENOMIC DNA]</scope>
    <source>
        <strain>342</strain>
    </source>
</reference>
<protein>
    <recommendedName>
        <fullName evidence="1">Pantothenate kinase</fullName>
        <ecNumber evidence="1">2.7.1.33</ecNumber>
    </recommendedName>
    <alternativeName>
        <fullName evidence="1">Pantothenic acid kinase</fullName>
    </alternativeName>
</protein>
<organism>
    <name type="scientific">Klebsiella pneumoniae (strain 342)</name>
    <dbReference type="NCBI Taxonomy" id="507522"/>
    <lineage>
        <taxon>Bacteria</taxon>
        <taxon>Pseudomonadati</taxon>
        <taxon>Pseudomonadota</taxon>
        <taxon>Gammaproteobacteria</taxon>
        <taxon>Enterobacterales</taxon>
        <taxon>Enterobacteriaceae</taxon>
        <taxon>Klebsiella/Raoultella group</taxon>
        <taxon>Klebsiella</taxon>
        <taxon>Klebsiella pneumoniae complex</taxon>
    </lineage>
</organism>
<evidence type="ECO:0000255" key="1">
    <source>
        <dbReference type="HAMAP-Rule" id="MF_00215"/>
    </source>
</evidence>
<evidence type="ECO:0007829" key="2">
    <source>
        <dbReference type="PDB" id="4GI7"/>
    </source>
</evidence>
<evidence type="ECO:0007829" key="3">
    <source>
        <dbReference type="PDB" id="4NE2"/>
    </source>
</evidence>
<sequence>MSQKEQTLMTPYLQFNRHQWAALRDSVPMTLTEDEITRLKGINEDLSLEEVAEIYLPLSRLLNFYISSNLRRQAVLEQFLGTNGQRIPYIISIAGSVAVGKSTTARVLQALLSRWPEHRHVELITTDGFLHPNSVLKERGLMKKKGFPQSYDMHRLVKFVSDLKSGVPQATAPVYSHLIYDVIPDGDKTVAQPDILILEGLNVLQSGMDYPHDPHHVFVSDFVDFSIYVDAPEELLKSWYINRFLKFREGAFTDPDSYFHNYAKLSKEEAVDIATSLWNEINLMNLKENILPTRERASLIMTKSANHSVNQVRLRK</sequence>